<dbReference type="EMBL" id="CP000927">
    <property type="protein sequence ID" value="ABZ69295.1"/>
    <property type="molecule type" value="Genomic_DNA"/>
</dbReference>
<dbReference type="SMR" id="B0T360"/>
<dbReference type="STRING" id="366602.Caul_0158"/>
<dbReference type="KEGG" id="cak:Caul_0158"/>
<dbReference type="eggNOG" id="COG1195">
    <property type="taxonomic scope" value="Bacteria"/>
</dbReference>
<dbReference type="HOGENOM" id="CLU_040267_2_0_5"/>
<dbReference type="OrthoDB" id="9803889at2"/>
<dbReference type="GO" id="GO:0005737">
    <property type="term" value="C:cytoplasm"/>
    <property type="evidence" value="ECO:0007669"/>
    <property type="project" value="UniProtKB-SubCell"/>
</dbReference>
<dbReference type="GO" id="GO:0005524">
    <property type="term" value="F:ATP binding"/>
    <property type="evidence" value="ECO:0007669"/>
    <property type="project" value="UniProtKB-UniRule"/>
</dbReference>
<dbReference type="GO" id="GO:0016887">
    <property type="term" value="F:ATP hydrolysis activity"/>
    <property type="evidence" value="ECO:0007669"/>
    <property type="project" value="InterPro"/>
</dbReference>
<dbReference type="GO" id="GO:0003697">
    <property type="term" value="F:single-stranded DNA binding"/>
    <property type="evidence" value="ECO:0007669"/>
    <property type="project" value="UniProtKB-UniRule"/>
</dbReference>
<dbReference type="GO" id="GO:0006260">
    <property type="term" value="P:DNA replication"/>
    <property type="evidence" value="ECO:0007669"/>
    <property type="project" value="UniProtKB-UniRule"/>
</dbReference>
<dbReference type="GO" id="GO:0000731">
    <property type="term" value="P:DNA synthesis involved in DNA repair"/>
    <property type="evidence" value="ECO:0007669"/>
    <property type="project" value="TreeGrafter"/>
</dbReference>
<dbReference type="GO" id="GO:0006302">
    <property type="term" value="P:double-strand break repair"/>
    <property type="evidence" value="ECO:0007669"/>
    <property type="project" value="TreeGrafter"/>
</dbReference>
<dbReference type="GO" id="GO:0009432">
    <property type="term" value="P:SOS response"/>
    <property type="evidence" value="ECO:0007669"/>
    <property type="project" value="UniProtKB-UniRule"/>
</dbReference>
<dbReference type="Gene3D" id="3.40.50.300">
    <property type="entry name" value="P-loop containing nucleotide triphosphate hydrolases"/>
    <property type="match status" value="1"/>
</dbReference>
<dbReference type="Gene3D" id="1.20.1050.90">
    <property type="entry name" value="RecF/RecN/SMC, N-terminal domain"/>
    <property type="match status" value="1"/>
</dbReference>
<dbReference type="HAMAP" id="MF_00365">
    <property type="entry name" value="RecF"/>
    <property type="match status" value="1"/>
</dbReference>
<dbReference type="InterPro" id="IPR003593">
    <property type="entry name" value="AAA+_ATPase"/>
</dbReference>
<dbReference type="InterPro" id="IPR001238">
    <property type="entry name" value="DNA-binding_RecF"/>
</dbReference>
<dbReference type="InterPro" id="IPR018078">
    <property type="entry name" value="DNA-binding_RecF_CS"/>
</dbReference>
<dbReference type="InterPro" id="IPR027417">
    <property type="entry name" value="P-loop_NTPase"/>
</dbReference>
<dbReference type="InterPro" id="IPR003395">
    <property type="entry name" value="RecF/RecN/SMC_N"/>
</dbReference>
<dbReference type="InterPro" id="IPR042174">
    <property type="entry name" value="RecF_2"/>
</dbReference>
<dbReference type="NCBIfam" id="TIGR00611">
    <property type="entry name" value="recf"/>
    <property type="match status" value="1"/>
</dbReference>
<dbReference type="PANTHER" id="PTHR32182">
    <property type="entry name" value="DNA REPLICATION AND REPAIR PROTEIN RECF"/>
    <property type="match status" value="1"/>
</dbReference>
<dbReference type="PANTHER" id="PTHR32182:SF0">
    <property type="entry name" value="DNA REPLICATION AND REPAIR PROTEIN RECF"/>
    <property type="match status" value="1"/>
</dbReference>
<dbReference type="Pfam" id="PF02463">
    <property type="entry name" value="SMC_N"/>
    <property type="match status" value="1"/>
</dbReference>
<dbReference type="SMART" id="SM00382">
    <property type="entry name" value="AAA"/>
    <property type="match status" value="1"/>
</dbReference>
<dbReference type="SUPFAM" id="SSF52540">
    <property type="entry name" value="P-loop containing nucleoside triphosphate hydrolases"/>
    <property type="match status" value="1"/>
</dbReference>
<dbReference type="PROSITE" id="PS00617">
    <property type="entry name" value="RECF_1"/>
    <property type="match status" value="1"/>
</dbReference>
<dbReference type="PROSITE" id="PS00618">
    <property type="entry name" value="RECF_2"/>
    <property type="match status" value="1"/>
</dbReference>
<comment type="function">
    <text evidence="1">The RecF protein is involved in DNA metabolism; it is required for DNA replication and normal SOS inducibility. RecF binds preferentially to single-stranded, linear DNA. It also seems to bind ATP.</text>
</comment>
<comment type="subcellular location">
    <subcellularLocation>
        <location evidence="1">Cytoplasm</location>
    </subcellularLocation>
</comment>
<comment type="similarity">
    <text evidence="1">Belongs to the RecF family.</text>
</comment>
<evidence type="ECO:0000255" key="1">
    <source>
        <dbReference type="HAMAP-Rule" id="MF_00365"/>
    </source>
</evidence>
<reference key="1">
    <citation type="submission" date="2008-01" db="EMBL/GenBank/DDBJ databases">
        <title>Complete sequence of chromosome of Caulobacter sp. K31.</title>
        <authorList>
            <consortium name="US DOE Joint Genome Institute"/>
            <person name="Copeland A."/>
            <person name="Lucas S."/>
            <person name="Lapidus A."/>
            <person name="Barry K."/>
            <person name="Glavina del Rio T."/>
            <person name="Dalin E."/>
            <person name="Tice H."/>
            <person name="Pitluck S."/>
            <person name="Bruce D."/>
            <person name="Goodwin L."/>
            <person name="Thompson L.S."/>
            <person name="Brettin T."/>
            <person name="Detter J.C."/>
            <person name="Han C."/>
            <person name="Schmutz J."/>
            <person name="Larimer F."/>
            <person name="Land M."/>
            <person name="Hauser L."/>
            <person name="Kyrpides N."/>
            <person name="Kim E."/>
            <person name="Stephens C."/>
            <person name="Richardson P."/>
        </authorList>
    </citation>
    <scope>NUCLEOTIDE SEQUENCE [LARGE SCALE GENOMIC DNA]</scope>
    <source>
        <strain>K31</strain>
    </source>
</reference>
<name>RECF_CAUSK</name>
<sequence length="392" mass="41834">MSRAALLSLTLTDFRSYERATLRPDGASVYLFGANGAGKTNLLEAISLLSPGKGLRGSSLIEVGRRLPGEATGRAWAVAAETEAPQTDFGQDEPVRLGTGVELAGAARRIVRIDGETVPPGRLADHVRPIWLTPAQDRLFLEAASERRRFFDRLVFAGEPAHAGHANAYDKAQRERMRLLTDAAESGQPADAVWLTALEARLGAAGALMANARARTLMALQAEIDSRGDRPFPRARLALTGEWEKLALVGVEIAEIEARLAAALAAARPRDGAAGRALTGPHRGDLAIHHVDKDRPAAECSTGEQKALILNLVLAQAARLSRAKDAPNPILLLDEVAAHLDLKRRAALADEITALGLQAFLTGTDQSLFDHLKGRALGVRVSELGLTALEDV</sequence>
<organism>
    <name type="scientific">Caulobacter sp. (strain K31)</name>
    <dbReference type="NCBI Taxonomy" id="366602"/>
    <lineage>
        <taxon>Bacteria</taxon>
        <taxon>Pseudomonadati</taxon>
        <taxon>Pseudomonadota</taxon>
        <taxon>Alphaproteobacteria</taxon>
        <taxon>Caulobacterales</taxon>
        <taxon>Caulobacteraceae</taxon>
        <taxon>Caulobacter</taxon>
    </lineage>
</organism>
<accession>B0T360</accession>
<keyword id="KW-0067">ATP-binding</keyword>
<keyword id="KW-0963">Cytoplasm</keyword>
<keyword id="KW-0227">DNA damage</keyword>
<keyword id="KW-0234">DNA repair</keyword>
<keyword id="KW-0235">DNA replication</keyword>
<keyword id="KW-0238">DNA-binding</keyword>
<keyword id="KW-0547">Nucleotide-binding</keyword>
<keyword id="KW-0742">SOS response</keyword>
<feature type="chain" id="PRO_1000205473" description="DNA replication and repair protein RecF">
    <location>
        <begin position="1"/>
        <end position="392"/>
    </location>
</feature>
<feature type="binding site" evidence="1">
    <location>
        <begin position="33"/>
        <end position="40"/>
    </location>
    <ligand>
        <name>ATP</name>
        <dbReference type="ChEBI" id="CHEBI:30616"/>
    </ligand>
</feature>
<proteinExistence type="inferred from homology"/>
<protein>
    <recommendedName>
        <fullName evidence="1">DNA replication and repair protein RecF</fullName>
    </recommendedName>
</protein>
<gene>
    <name evidence="1" type="primary">recF</name>
    <name type="ordered locus">Caul_0158</name>
</gene>